<name>PAGP_ECOLW</name>
<accession>E0J1Q4</accession>
<accession>H9XYT9</accession>
<comment type="function">
    <text evidence="1">Transfers a palmitate residue from the sn-1 position of a phospholipid to the N-linked hydroxymyristate on the proximal unit of lipid A or its precursors.</text>
</comment>
<comment type="catalytic activity">
    <reaction evidence="1">
        <text>lipid A (E. coli) + a 1-hexadecanoyl-2-acyl-sn-glycero-3-phosphocholine = hepta-acyl lipid A (E. coli) + a 2-acyl-sn-glycero-3-phosphocholine</text>
        <dbReference type="Rhea" id="RHEA:46864"/>
        <dbReference type="ChEBI" id="CHEBI:57875"/>
        <dbReference type="ChEBI" id="CHEBI:77369"/>
        <dbReference type="ChEBI" id="CHEBI:87048"/>
        <dbReference type="ChEBI" id="CHEBI:134257"/>
        <dbReference type="EC" id="2.3.1.251"/>
    </reaction>
</comment>
<comment type="catalytic activity">
    <reaction evidence="1">
        <text>lipid IIA + a 1-hexadecanoyl-2-acyl-sn-glycero-3-phosphocholine = lipid IIB + a 2-acyl-sn-glycero-3-phosphocholine</text>
        <dbReference type="Rhea" id="RHEA:46872"/>
        <dbReference type="ChEBI" id="CHEBI:57875"/>
        <dbReference type="ChEBI" id="CHEBI:77369"/>
        <dbReference type="ChEBI" id="CHEBI:86226"/>
        <dbReference type="ChEBI" id="CHEBI:87058"/>
        <dbReference type="EC" id="2.3.1.251"/>
    </reaction>
</comment>
<comment type="catalytic activity">
    <reaction evidence="1">
        <text>lipid IVA (E. coli) + a 1-hexadecanoyl-2-acyl-sn-glycero-3-phosphocholine = lipid IVB (E. coli) + a 2-acyl-sn-glycero-3-phosphocholine</text>
        <dbReference type="Rhea" id="RHEA:46868"/>
        <dbReference type="ChEBI" id="CHEBI:57875"/>
        <dbReference type="ChEBI" id="CHEBI:58603"/>
        <dbReference type="ChEBI" id="CHEBI:77369"/>
        <dbReference type="ChEBI" id="CHEBI:87049"/>
        <dbReference type="EC" id="2.3.1.251"/>
    </reaction>
</comment>
<comment type="subunit">
    <text evidence="1">Homodimer.</text>
</comment>
<comment type="subcellular location">
    <subcellularLocation>
        <location evidence="1">Cell outer membrane</location>
    </subcellularLocation>
</comment>
<comment type="similarity">
    <text evidence="1">Belongs to the lipid A palmitoyltransferase family.</text>
</comment>
<dbReference type="EC" id="2.3.1.251" evidence="1"/>
<dbReference type="EMBL" id="AEDF01000012">
    <property type="protein sequence ID" value="EFN37868.1"/>
    <property type="molecule type" value="Genomic_DNA"/>
</dbReference>
<dbReference type="EMBL" id="CP002185">
    <property type="protein sequence ID" value="ADT74205.1"/>
    <property type="molecule type" value="Genomic_DNA"/>
</dbReference>
<dbReference type="EMBL" id="CP002967">
    <property type="protein sequence ID" value="AFH10341.1"/>
    <property type="molecule type" value="Genomic_DNA"/>
</dbReference>
<dbReference type="RefSeq" id="WP_001349980.1">
    <property type="nucleotide sequence ID" value="NZ_WBMH01000008.1"/>
</dbReference>
<dbReference type="BMRB" id="E0J1Q4"/>
<dbReference type="SMR" id="E0J1Q4"/>
<dbReference type="KEGG" id="ell:WFL_03365"/>
<dbReference type="KEGG" id="elw:ECW_m0677"/>
<dbReference type="PATRIC" id="fig|566546.30.peg.696"/>
<dbReference type="HOGENOM" id="CLU_104099_0_0_6"/>
<dbReference type="Proteomes" id="UP000008525">
    <property type="component" value="Chromosome"/>
</dbReference>
<dbReference type="GO" id="GO:0009279">
    <property type="term" value="C:cell outer membrane"/>
    <property type="evidence" value="ECO:0007669"/>
    <property type="project" value="UniProtKB-SubCell"/>
</dbReference>
<dbReference type="GO" id="GO:0016416">
    <property type="term" value="F:O-palmitoyltransferase activity"/>
    <property type="evidence" value="ECO:0007669"/>
    <property type="project" value="UniProtKB-UniRule"/>
</dbReference>
<dbReference type="GO" id="GO:0009245">
    <property type="term" value="P:lipid A biosynthetic process"/>
    <property type="evidence" value="ECO:0007669"/>
    <property type="project" value="UniProtKB-UniRule"/>
</dbReference>
<dbReference type="FunFam" id="2.40.160.20:FF:000002">
    <property type="entry name" value="Lipid A palmitoyltransferase PagP"/>
    <property type="match status" value="1"/>
</dbReference>
<dbReference type="Gene3D" id="2.40.160.20">
    <property type="match status" value="1"/>
</dbReference>
<dbReference type="HAMAP" id="MF_00837">
    <property type="entry name" value="PagP_transferase"/>
    <property type="match status" value="1"/>
</dbReference>
<dbReference type="InterPro" id="IPR009746">
    <property type="entry name" value="LipidA_acyl_PagP"/>
</dbReference>
<dbReference type="InterPro" id="IPR011250">
    <property type="entry name" value="OMP/PagP_b-brl"/>
</dbReference>
<dbReference type="NCBIfam" id="NF008271">
    <property type="entry name" value="PRK11045.1"/>
    <property type="match status" value="1"/>
</dbReference>
<dbReference type="Pfam" id="PF07017">
    <property type="entry name" value="PagP"/>
    <property type="match status" value="1"/>
</dbReference>
<dbReference type="SUPFAM" id="SSF56925">
    <property type="entry name" value="OMPA-like"/>
    <property type="match status" value="1"/>
</dbReference>
<gene>
    <name evidence="1" type="primary">pagP</name>
    <name type="ordered locus">ECW_m0677</name>
    <name type="ordered locus">WFL_03365</name>
    <name type="ORF">EschWDRAFT_2559</name>
</gene>
<evidence type="ECO:0000255" key="1">
    <source>
        <dbReference type="HAMAP-Rule" id="MF_00837"/>
    </source>
</evidence>
<protein>
    <recommendedName>
        <fullName evidence="1">Lipid A palmitoyltransferase PagP</fullName>
        <ecNumber evidence="1">2.3.1.251</ecNumber>
    </recommendedName>
    <alternativeName>
        <fullName evidence="1">Lipid A acylation protein</fullName>
    </alternativeName>
</protein>
<feature type="signal peptide" evidence="1">
    <location>
        <begin position="1"/>
        <end position="25"/>
    </location>
</feature>
<feature type="chain" id="PRO_0000414450" description="Lipid A palmitoyltransferase PagP">
    <location>
        <begin position="26"/>
        <end position="186"/>
    </location>
</feature>
<feature type="active site" evidence="1">
    <location>
        <position position="58"/>
    </location>
</feature>
<feature type="active site" evidence="1">
    <location>
        <position position="101"/>
    </location>
</feature>
<feature type="active site" evidence="1">
    <location>
        <position position="102"/>
    </location>
</feature>
<feature type="site" description="Role in lipopolysaccharide recognition" evidence="1">
    <location>
        <position position="67"/>
    </location>
</feature>
<feature type="site" description="Role in the phospholipid gating" evidence="1">
    <location>
        <position position="172"/>
    </location>
</feature>
<reference key="1">
    <citation type="submission" date="2010-07" db="EMBL/GenBank/DDBJ databases">
        <title>The draft genome of Escherichia coli W.</title>
        <authorList>
            <consortium name="US DOE Joint Genome Institute (JGI-PGF)"/>
            <person name="Lucas S."/>
            <person name="Copeland A."/>
            <person name="Lapidus A."/>
            <person name="Cheng J.-F."/>
            <person name="Bruce D."/>
            <person name="Goodwin L."/>
            <person name="Pitluck S."/>
            <person name="Land M.L."/>
            <person name="Hauser L."/>
            <person name="Chang Y.-J."/>
            <person name="Jeffries C."/>
            <person name="Tremaine M."/>
            <person name="Landick R."/>
            <person name="Keating D."/>
            <person name="Woyke T.J."/>
        </authorList>
    </citation>
    <scope>NUCLEOTIDE SEQUENCE [LARGE SCALE GENOMIC DNA]</scope>
    <source>
        <strain>ATCC 9637 / CCM 2024 / DSM 1116 / LMG 11080 / NBRC 13500 / NCIMB 8666 / NRRL B-766 / W</strain>
    </source>
</reference>
<reference key="2">
    <citation type="journal article" date="2011" name="BMC Genomics">
        <title>The genome sequence of E. coli W (ATCC 9637): comparative genome analysis and an improved genome-scale reconstruction of E. coli.</title>
        <authorList>
            <person name="Archer C.T."/>
            <person name="Kim J.F."/>
            <person name="Jeong H."/>
            <person name="Park J.H."/>
            <person name="Vickers C.E."/>
            <person name="Lee S.Y."/>
            <person name="Nielsen L.K."/>
        </authorList>
    </citation>
    <scope>NUCLEOTIDE SEQUENCE [LARGE SCALE GENOMIC DNA]</scope>
    <source>
        <strain>ATCC 9637 / CCM 2024 / DSM 1116 / LMG 11080 / NBRC 13500 / NCIMB 8666 / NRRL B-766 / W</strain>
    </source>
</reference>
<reference key="3">
    <citation type="journal article" date="2012" name="J. Ind. Microbiol. Biotechnol.">
        <title>Optical mapping and sequencing of the Escherichia coli KO11 genome reveal extensive chromosomal rearrangements, and multiple tandem copies of the Zymomonas mobilis pdc and adhB genes.</title>
        <authorList>
            <person name="Turner P.C."/>
            <person name="Yomano L.P."/>
            <person name="Jarboe L.R."/>
            <person name="York S.W."/>
            <person name="Baggett C.L."/>
            <person name="Moritz B.E."/>
            <person name="Zentz E.B."/>
            <person name="Shanmugam K.T."/>
            <person name="Ingram L.O."/>
        </authorList>
    </citation>
    <scope>NUCLEOTIDE SEQUENCE [LARGE SCALE GENOMIC DNA]</scope>
    <source>
        <strain>ATCC 9637 / CCM 2024 / DSM 1116 / LMG 11080 / NBRC 13500 / NCIMB 8666 / NRRL B-766 / W</strain>
    </source>
</reference>
<organism>
    <name type="scientific">Escherichia coli (strain ATCC 9637 / CCM 2024 / DSM 1116 / LMG 11080 / NBRC 13500 / NCIMB 8666 / NRRL B-766 / W)</name>
    <dbReference type="NCBI Taxonomy" id="566546"/>
    <lineage>
        <taxon>Bacteria</taxon>
        <taxon>Pseudomonadati</taxon>
        <taxon>Pseudomonadota</taxon>
        <taxon>Gammaproteobacteria</taxon>
        <taxon>Enterobacterales</taxon>
        <taxon>Enterobacteriaceae</taxon>
        <taxon>Escherichia</taxon>
    </lineage>
</organism>
<proteinExistence type="inferred from homology"/>
<keyword id="KW-0012">Acyltransferase</keyword>
<keyword id="KW-0998">Cell outer membrane</keyword>
<keyword id="KW-0472">Membrane</keyword>
<keyword id="KW-0732">Signal</keyword>
<keyword id="KW-0808">Transferase</keyword>
<sequence length="186" mass="21740">MNVSKYVAIFSFVFIQLISVGKVFANADEWMTTFRENIAQTRQQPEHYDLYIPAITWHARFAYDKEKTDRYNERPWGGGFGLSRWDEKGNWHGLYAMAFKDSWNKWEPIAGYGWESTWRPLADENFHLGLGFTAGVTARDNWNYIPLPVLLPLASVGYGPVTFQMTYIPGTYNNGNVYFAWMRFQF</sequence>